<gene>
    <name evidence="1" type="primary">nadK</name>
    <name type="ordered locus">SG2660</name>
</gene>
<comment type="function">
    <text evidence="1">Involved in the regulation of the intracellular balance of NAD and NADP, and is a key enzyme in the biosynthesis of NADP. Catalyzes specifically the phosphorylation on 2'-hydroxyl of the adenosine moiety of NAD to yield NADP.</text>
</comment>
<comment type="catalytic activity">
    <reaction evidence="1">
        <text>NAD(+) + ATP = ADP + NADP(+) + H(+)</text>
        <dbReference type="Rhea" id="RHEA:18629"/>
        <dbReference type="ChEBI" id="CHEBI:15378"/>
        <dbReference type="ChEBI" id="CHEBI:30616"/>
        <dbReference type="ChEBI" id="CHEBI:57540"/>
        <dbReference type="ChEBI" id="CHEBI:58349"/>
        <dbReference type="ChEBI" id="CHEBI:456216"/>
        <dbReference type="EC" id="2.7.1.23"/>
    </reaction>
</comment>
<comment type="cofactor">
    <cofactor evidence="1">
        <name>a divalent metal cation</name>
        <dbReference type="ChEBI" id="CHEBI:60240"/>
    </cofactor>
</comment>
<comment type="subcellular location">
    <subcellularLocation>
        <location evidence="1">Cytoplasm</location>
    </subcellularLocation>
</comment>
<comment type="similarity">
    <text evidence="1">Belongs to the NAD kinase family.</text>
</comment>
<reference key="1">
    <citation type="journal article" date="2008" name="Genome Res.">
        <title>Comparative genome analysis of Salmonella enteritidis PT4 and Salmonella gallinarum 287/91 provides insights into evolutionary and host adaptation pathways.</title>
        <authorList>
            <person name="Thomson N.R."/>
            <person name="Clayton D.J."/>
            <person name="Windhorst D."/>
            <person name="Vernikos G."/>
            <person name="Davidson S."/>
            <person name="Churcher C."/>
            <person name="Quail M.A."/>
            <person name="Stevens M."/>
            <person name="Jones M.A."/>
            <person name="Watson M."/>
            <person name="Barron A."/>
            <person name="Layton A."/>
            <person name="Pickard D."/>
            <person name="Kingsley R.A."/>
            <person name="Bignell A."/>
            <person name="Clark L."/>
            <person name="Harris B."/>
            <person name="Ormond D."/>
            <person name="Abdellah Z."/>
            <person name="Brooks K."/>
            <person name="Cherevach I."/>
            <person name="Chillingworth T."/>
            <person name="Woodward J."/>
            <person name="Norberczak H."/>
            <person name="Lord A."/>
            <person name="Arrowsmith C."/>
            <person name="Jagels K."/>
            <person name="Moule S."/>
            <person name="Mungall K."/>
            <person name="Saunders M."/>
            <person name="Whitehead S."/>
            <person name="Chabalgoity J.A."/>
            <person name="Maskell D."/>
            <person name="Humphreys T."/>
            <person name="Roberts M."/>
            <person name="Barrow P.A."/>
            <person name="Dougan G."/>
            <person name="Parkhill J."/>
        </authorList>
    </citation>
    <scope>NUCLEOTIDE SEQUENCE [LARGE SCALE GENOMIC DNA]</scope>
    <source>
        <strain>287/91 / NCTC 13346</strain>
    </source>
</reference>
<organism>
    <name type="scientific">Salmonella gallinarum (strain 287/91 / NCTC 13346)</name>
    <dbReference type="NCBI Taxonomy" id="550538"/>
    <lineage>
        <taxon>Bacteria</taxon>
        <taxon>Pseudomonadati</taxon>
        <taxon>Pseudomonadota</taxon>
        <taxon>Gammaproteobacteria</taxon>
        <taxon>Enterobacterales</taxon>
        <taxon>Enterobacteriaceae</taxon>
        <taxon>Salmonella</taxon>
    </lineage>
</organism>
<dbReference type="EC" id="2.7.1.23" evidence="1"/>
<dbReference type="EMBL" id="AM933173">
    <property type="protein sequence ID" value="CAR38477.1"/>
    <property type="molecule type" value="Genomic_DNA"/>
</dbReference>
<dbReference type="RefSeq" id="WP_001059151.1">
    <property type="nucleotide sequence ID" value="NC_011274.1"/>
</dbReference>
<dbReference type="SMR" id="B5RD91"/>
<dbReference type="KEGG" id="seg:SG2660"/>
<dbReference type="HOGENOM" id="CLU_008831_0_1_6"/>
<dbReference type="Proteomes" id="UP000008321">
    <property type="component" value="Chromosome"/>
</dbReference>
<dbReference type="GO" id="GO:0005737">
    <property type="term" value="C:cytoplasm"/>
    <property type="evidence" value="ECO:0007669"/>
    <property type="project" value="UniProtKB-SubCell"/>
</dbReference>
<dbReference type="GO" id="GO:0005524">
    <property type="term" value="F:ATP binding"/>
    <property type="evidence" value="ECO:0007669"/>
    <property type="project" value="UniProtKB-KW"/>
</dbReference>
<dbReference type="GO" id="GO:0046872">
    <property type="term" value="F:metal ion binding"/>
    <property type="evidence" value="ECO:0007669"/>
    <property type="project" value="UniProtKB-UniRule"/>
</dbReference>
<dbReference type="GO" id="GO:0051287">
    <property type="term" value="F:NAD binding"/>
    <property type="evidence" value="ECO:0007669"/>
    <property type="project" value="UniProtKB-ARBA"/>
</dbReference>
<dbReference type="GO" id="GO:0003951">
    <property type="term" value="F:NAD+ kinase activity"/>
    <property type="evidence" value="ECO:0007669"/>
    <property type="project" value="UniProtKB-UniRule"/>
</dbReference>
<dbReference type="GO" id="GO:0019674">
    <property type="term" value="P:NAD metabolic process"/>
    <property type="evidence" value="ECO:0007669"/>
    <property type="project" value="InterPro"/>
</dbReference>
<dbReference type="GO" id="GO:0006741">
    <property type="term" value="P:NADP biosynthetic process"/>
    <property type="evidence" value="ECO:0007669"/>
    <property type="project" value="UniProtKB-UniRule"/>
</dbReference>
<dbReference type="FunFam" id="2.60.200.30:FF:000001">
    <property type="entry name" value="NAD kinase"/>
    <property type="match status" value="1"/>
</dbReference>
<dbReference type="FunFam" id="3.40.50.10330:FF:000004">
    <property type="entry name" value="NAD kinase"/>
    <property type="match status" value="1"/>
</dbReference>
<dbReference type="Gene3D" id="3.40.50.10330">
    <property type="entry name" value="Probable inorganic polyphosphate/atp-NAD kinase, domain 1"/>
    <property type="match status" value="1"/>
</dbReference>
<dbReference type="Gene3D" id="2.60.200.30">
    <property type="entry name" value="Probable inorganic polyphosphate/atp-NAD kinase, domain 2"/>
    <property type="match status" value="1"/>
</dbReference>
<dbReference type="HAMAP" id="MF_00361">
    <property type="entry name" value="NAD_kinase"/>
    <property type="match status" value="1"/>
</dbReference>
<dbReference type="InterPro" id="IPR017438">
    <property type="entry name" value="ATP-NAD_kinase_N"/>
</dbReference>
<dbReference type="InterPro" id="IPR017437">
    <property type="entry name" value="ATP-NAD_kinase_PpnK-typ_C"/>
</dbReference>
<dbReference type="InterPro" id="IPR016064">
    <property type="entry name" value="NAD/diacylglycerol_kinase_sf"/>
</dbReference>
<dbReference type="InterPro" id="IPR002504">
    <property type="entry name" value="NADK"/>
</dbReference>
<dbReference type="NCBIfam" id="NF002306">
    <property type="entry name" value="PRK01231.1"/>
    <property type="match status" value="1"/>
</dbReference>
<dbReference type="NCBIfam" id="NF002893">
    <property type="entry name" value="PRK03378.1"/>
    <property type="match status" value="1"/>
</dbReference>
<dbReference type="PANTHER" id="PTHR20275">
    <property type="entry name" value="NAD KINASE"/>
    <property type="match status" value="1"/>
</dbReference>
<dbReference type="PANTHER" id="PTHR20275:SF0">
    <property type="entry name" value="NAD KINASE"/>
    <property type="match status" value="1"/>
</dbReference>
<dbReference type="Pfam" id="PF01513">
    <property type="entry name" value="NAD_kinase"/>
    <property type="match status" value="1"/>
</dbReference>
<dbReference type="Pfam" id="PF20143">
    <property type="entry name" value="NAD_kinase_C"/>
    <property type="match status" value="1"/>
</dbReference>
<dbReference type="SUPFAM" id="SSF111331">
    <property type="entry name" value="NAD kinase/diacylglycerol kinase-like"/>
    <property type="match status" value="1"/>
</dbReference>
<name>NADK_SALG2</name>
<accession>B5RD91</accession>
<sequence>MNNHFKCIGIVGHPRHPTALTTHEMLYRWLCAQGYEVIVEQQIAHELQLKNVPTGTLAEIGQQADLAVVVGGDGNMLGAARTLARYNINVIGINRGNLGFLTDLDPDNALQQLSDVLEGRYISEKRFLLEAQVCQQDRQKRISTAINEVVLHPGKVAHMIEFEVYIDETFAFSQRSDGLIISTPTGSTAYSLSAGGPILTPSLDAITLVPMFPHTLSARPLVINSSSTIRLRFSHRRSDLEISCDSQIALPIQEGEDVLIRRCDYHLNLIHPKDYSYFNTLSTKLGWSKKLF</sequence>
<proteinExistence type="inferred from homology"/>
<evidence type="ECO:0000255" key="1">
    <source>
        <dbReference type="HAMAP-Rule" id="MF_00361"/>
    </source>
</evidence>
<keyword id="KW-0067">ATP-binding</keyword>
<keyword id="KW-0963">Cytoplasm</keyword>
<keyword id="KW-0418">Kinase</keyword>
<keyword id="KW-0520">NAD</keyword>
<keyword id="KW-0521">NADP</keyword>
<keyword id="KW-0547">Nucleotide-binding</keyword>
<keyword id="KW-0808">Transferase</keyword>
<feature type="chain" id="PRO_1000120883" description="NAD kinase">
    <location>
        <begin position="1"/>
        <end position="292"/>
    </location>
</feature>
<feature type="active site" description="Proton acceptor" evidence="1">
    <location>
        <position position="73"/>
    </location>
</feature>
<feature type="binding site" evidence="1">
    <location>
        <begin position="73"/>
        <end position="74"/>
    </location>
    <ligand>
        <name>NAD(+)</name>
        <dbReference type="ChEBI" id="CHEBI:57540"/>
    </ligand>
</feature>
<feature type="binding site" evidence="1">
    <location>
        <begin position="147"/>
        <end position="148"/>
    </location>
    <ligand>
        <name>NAD(+)</name>
        <dbReference type="ChEBI" id="CHEBI:57540"/>
    </ligand>
</feature>
<feature type="binding site" evidence="1">
    <location>
        <position position="158"/>
    </location>
    <ligand>
        <name>NAD(+)</name>
        <dbReference type="ChEBI" id="CHEBI:57540"/>
    </ligand>
</feature>
<feature type="binding site" evidence="1">
    <location>
        <position position="175"/>
    </location>
    <ligand>
        <name>NAD(+)</name>
        <dbReference type="ChEBI" id="CHEBI:57540"/>
    </ligand>
</feature>
<feature type="binding site" evidence="1">
    <location>
        <position position="177"/>
    </location>
    <ligand>
        <name>NAD(+)</name>
        <dbReference type="ChEBI" id="CHEBI:57540"/>
    </ligand>
</feature>
<feature type="binding site" evidence="1">
    <location>
        <begin position="188"/>
        <end position="193"/>
    </location>
    <ligand>
        <name>NAD(+)</name>
        <dbReference type="ChEBI" id="CHEBI:57540"/>
    </ligand>
</feature>
<feature type="binding site" evidence="1">
    <location>
        <position position="247"/>
    </location>
    <ligand>
        <name>NAD(+)</name>
        <dbReference type="ChEBI" id="CHEBI:57540"/>
    </ligand>
</feature>
<protein>
    <recommendedName>
        <fullName evidence="1">NAD kinase</fullName>
        <ecNumber evidence="1">2.7.1.23</ecNumber>
    </recommendedName>
    <alternativeName>
        <fullName evidence="1">ATP-dependent NAD kinase</fullName>
    </alternativeName>
</protein>